<proteinExistence type="inferred from homology"/>
<dbReference type="EMBL" id="CP000458">
    <property type="protein sequence ID" value="ABK07871.1"/>
    <property type="molecule type" value="Genomic_DNA"/>
</dbReference>
<dbReference type="RefSeq" id="WP_006051932.1">
    <property type="nucleotide sequence ID" value="NC_008542.1"/>
</dbReference>
<dbReference type="SMR" id="A0K5U4"/>
<dbReference type="GeneID" id="98102466"/>
<dbReference type="KEGG" id="bch:Bcen2424_1119"/>
<dbReference type="HOGENOM" id="CLU_129084_2_1_4"/>
<dbReference type="GO" id="GO:0015934">
    <property type="term" value="C:large ribosomal subunit"/>
    <property type="evidence" value="ECO:0007669"/>
    <property type="project" value="InterPro"/>
</dbReference>
<dbReference type="GO" id="GO:0003735">
    <property type="term" value="F:structural constituent of ribosome"/>
    <property type="evidence" value="ECO:0007669"/>
    <property type="project" value="InterPro"/>
</dbReference>
<dbReference type="GO" id="GO:0006412">
    <property type="term" value="P:translation"/>
    <property type="evidence" value="ECO:0007669"/>
    <property type="project" value="UniProtKB-UniRule"/>
</dbReference>
<dbReference type="HAMAP" id="MF_00340">
    <property type="entry name" value="Ribosomal_bL32"/>
    <property type="match status" value="1"/>
</dbReference>
<dbReference type="InterPro" id="IPR002677">
    <property type="entry name" value="Ribosomal_bL32"/>
</dbReference>
<dbReference type="InterPro" id="IPR044957">
    <property type="entry name" value="Ribosomal_bL32_bact"/>
</dbReference>
<dbReference type="InterPro" id="IPR011332">
    <property type="entry name" value="Ribosomal_zn-bd"/>
</dbReference>
<dbReference type="NCBIfam" id="TIGR01031">
    <property type="entry name" value="rpmF_bact"/>
    <property type="match status" value="1"/>
</dbReference>
<dbReference type="PANTHER" id="PTHR35534">
    <property type="entry name" value="50S RIBOSOMAL PROTEIN L32"/>
    <property type="match status" value="1"/>
</dbReference>
<dbReference type="PANTHER" id="PTHR35534:SF1">
    <property type="entry name" value="LARGE RIBOSOMAL SUBUNIT PROTEIN BL32"/>
    <property type="match status" value="1"/>
</dbReference>
<dbReference type="Pfam" id="PF01783">
    <property type="entry name" value="Ribosomal_L32p"/>
    <property type="match status" value="1"/>
</dbReference>
<dbReference type="SUPFAM" id="SSF57829">
    <property type="entry name" value="Zn-binding ribosomal proteins"/>
    <property type="match status" value="1"/>
</dbReference>
<sequence>MAVQQNKKSPSKRGMHRSHDFLTAAPLAVEPSTGEVHLRHHVSPNGYYRGKKVVKTKND</sequence>
<gene>
    <name evidence="1" type="primary">rpmF</name>
    <name type="ordered locus">Bcen2424_1119</name>
</gene>
<keyword id="KW-0687">Ribonucleoprotein</keyword>
<keyword id="KW-0689">Ribosomal protein</keyword>
<evidence type="ECO:0000255" key="1">
    <source>
        <dbReference type="HAMAP-Rule" id="MF_00340"/>
    </source>
</evidence>
<evidence type="ECO:0000256" key="2">
    <source>
        <dbReference type="SAM" id="MobiDB-lite"/>
    </source>
</evidence>
<evidence type="ECO:0000305" key="3"/>
<accession>A0K5U4</accession>
<organism>
    <name type="scientific">Burkholderia cenocepacia (strain HI2424)</name>
    <dbReference type="NCBI Taxonomy" id="331272"/>
    <lineage>
        <taxon>Bacteria</taxon>
        <taxon>Pseudomonadati</taxon>
        <taxon>Pseudomonadota</taxon>
        <taxon>Betaproteobacteria</taxon>
        <taxon>Burkholderiales</taxon>
        <taxon>Burkholderiaceae</taxon>
        <taxon>Burkholderia</taxon>
        <taxon>Burkholderia cepacia complex</taxon>
    </lineage>
</organism>
<protein>
    <recommendedName>
        <fullName evidence="1">Large ribosomal subunit protein bL32</fullName>
    </recommendedName>
    <alternativeName>
        <fullName evidence="3">50S ribosomal protein L32</fullName>
    </alternativeName>
</protein>
<name>RL32_BURCH</name>
<comment type="similarity">
    <text evidence="1">Belongs to the bacterial ribosomal protein bL32 family.</text>
</comment>
<feature type="chain" id="PRO_0000296436" description="Large ribosomal subunit protein bL32">
    <location>
        <begin position="1"/>
        <end position="59"/>
    </location>
</feature>
<feature type="region of interest" description="Disordered" evidence="2">
    <location>
        <begin position="1"/>
        <end position="23"/>
    </location>
</feature>
<feature type="region of interest" description="Disordered" evidence="2">
    <location>
        <begin position="35"/>
        <end position="59"/>
    </location>
</feature>
<feature type="compositionally biased region" description="Basic residues" evidence="2">
    <location>
        <begin position="49"/>
        <end position="59"/>
    </location>
</feature>
<reference key="1">
    <citation type="submission" date="2006-08" db="EMBL/GenBank/DDBJ databases">
        <title>Complete sequence of chromosome 1 of Burkholderia cenocepacia HI2424.</title>
        <authorList>
            <person name="Copeland A."/>
            <person name="Lucas S."/>
            <person name="Lapidus A."/>
            <person name="Barry K."/>
            <person name="Detter J.C."/>
            <person name="Glavina del Rio T."/>
            <person name="Hammon N."/>
            <person name="Israni S."/>
            <person name="Pitluck S."/>
            <person name="Chain P."/>
            <person name="Malfatti S."/>
            <person name="Shin M."/>
            <person name="Vergez L."/>
            <person name="Schmutz J."/>
            <person name="Larimer F."/>
            <person name="Land M."/>
            <person name="Hauser L."/>
            <person name="Kyrpides N."/>
            <person name="Kim E."/>
            <person name="LiPuma J.J."/>
            <person name="Gonzalez C.F."/>
            <person name="Konstantinidis K."/>
            <person name="Tiedje J.M."/>
            <person name="Richardson P."/>
        </authorList>
    </citation>
    <scope>NUCLEOTIDE SEQUENCE [LARGE SCALE GENOMIC DNA]</scope>
    <source>
        <strain>HI2424</strain>
    </source>
</reference>